<proteinExistence type="inferred from homology"/>
<organism>
    <name type="scientific">Acinetobacter baumannii (strain ATCC 17978 / DSM 105126 / CIP 53.77 / LMG 1025 / NCDC KC755 / 5377)</name>
    <dbReference type="NCBI Taxonomy" id="400667"/>
    <lineage>
        <taxon>Bacteria</taxon>
        <taxon>Pseudomonadati</taxon>
        <taxon>Pseudomonadota</taxon>
        <taxon>Gammaproteobacteria</taxon>
        <taxon>Moraxellales</taxon>
        <taxon>Moraxellaceae</taxon>
        <taxon>Acinetobacter</taxon>
        <taxon>Acinetobacter calcoaceticus/baumannii complex</taxon>
    </lineage>
</organism>
<dbReference type="EMBL" id="CP000521">
    <property type="protein sequence ID" value="ABO11054.2"/>
    <property type="molecule type" value="Genomic_DNA"/>
</dbReference>
<dbReference type="RefSeq" id="WP_000126166.1">
    <property type="nucleotide sequence ID" value="NZ_CP053098.1"/>
</dbReference>
<dbReference type="SMR" id="A3M2B0"/>
<dbReference type="KEGG" id="acb:A1S_0603"/>
<dbReference type="HOGENOM" id="CLU_105066_1_3_6"/>
<dbReference type="GO" id="GO:0005829">
    <property type="term" value="C:cytosol"/>
    <property type="evidence" value="ECO:0007669"/>
    <property type="project" value="TreeGrafter"/>
</dbReference>
<dbReference type="GO" id="GO:0003677">
    <property type="term" value="F:DNA binding"/>
    <property type="evidence" value="ECO:0007669"/>
    <property type="project" value="UniProtKB-UniRule"/>
</dbReference>
<dbReference type="GO" id="GO:0030527">
    <property type="term" value="F:structural constituent of chromatin"/>
    <property type="evidence" value="ECO:0007669"/>
    <property type="project" value="InterPro"/>
</dbReference>
<dbReference type="GO" id="GO:0006310">
    <property type="term" value="P:DNA recombination"/>
    <property type="evidence" value="ECO:0007669"/>
    <property type="project" value="UniProtKB-UniRule"/>
</dbReference>
<dbReference type="GO" id="GO:0009893">
    <property type="term" value="P:positive regulation of metabolic process"/>
    <property type="evidence" value="ECO:0007669"/>
    <property type="project" value="UniProtKB-ARBA"/>
</dbReference>
<dbReference type="GO" id="GO:0006355">
    <property type="term" value="P:regulation of DNA-templated transcription"/>
    <property type="evidence" value="ECO:0007669"/>
    <property type="project" value="UniProtKB-UniRule"/>
</dbReference>
<dbReference type="GO" id="GO:0006417">
    <property type="term" value="P:regulation of translation"/>
    <property type="evidence" value="ECO:0007669"/>
    <property type="project" value="UniProtKB-UniRule"/>
</dbReference>
<dbReference type="CDD" id="cd13835">
    <property type="entry name" value="IHF_A"/>
    <property type="match status" value="1"/>
</dbReference>
<dbReference type="FunFam" id="4.10.520.10:FF:000002">
    <property type="entry name" value="Integration host factor subunit alpha"/>
    <property type="match status" value="1"/>
</dbReference>
<dbReference type="Gene3D" id="4.10.520.10">
    <property type="entry name" value="IHF-like DNA-binding proteins"/>
    <property type="match status" value="1"/>
</dbReference>
<dbReference type="HAMAP" id="MF_00380">
    <property type="entry name" value="IHF_alpha"/>
    <property type="match status" value="1"/>
</dbReference>
<dbReference type="InterPro" id="IPR000119">
    <property type="entry name" value="Hist_DNA-bd"/>
</dbReference>
<dbReference type="InterPro" id="IPR020816">
    <property type="entry name" value="Histone-like_DNA-bd_CS"/>
</dbReference>
<dbReference type="InterPro" id="IPR010992">
    <property type="entry name" value="IHF-like_DNA-bd_dom_sf"/>
</dbReference>
<dbReference type="InterPro" id="IPR005684">
    <property type="entry name" value="IHF_alpha"/>
</dbReference>
<dbReference type="NCBIfam" id="TIGR00987">
    <property type="entry name" value="himA"/>
    <property type="match status" value="1"/>
</dbReference>
<dbReference type="NCBIfam" id="NF001401">
    <property type="entry name" value="PRK00285.1"/>
    <property type="match status" value="1"/>
</dbReference>
<dbReference type="PANTHER" id="PTHR33175">
    <property type="entry name" value="DNA-BINDING PROTEIN HU"/>
    <property type="match status" value="1"/>
</dbReference>
<dbReference type="PANTHER" id="PTHR33175:SF2">
    <property type="entry name" value="INTEGRATION HOST FACTOR SUBUNIT ALPHA"/>
    <property type="match status" value="1"/>
</dbReference>
<dbReference type="Pfam" id="PF00216">
    <property type="entry name" value="Bac_DNA_binding"/>
    <property type="match status" value="1"/>
</dbReference>
<dbReference type="PRINTS" id="PR01727">
    <property type="entry name" value="DNABINDINGHU"/>
</dbReference>
<dbReference type="SMART" id="SM00411">
    <property type="entry name" value="BHL"/>
    <property type="match status" value="1"/>
</dbReference>
<dbReference type="SUPFAM" id="SSF47729">
    <property type="entry name" value="IHF-like DNA-binding proteins"/>
    <property type="match status" value="1"/>
</dbReference>
<dbReference type="PROSITE" id="PS00045">
    <property type="entry name" value="HISTONE_LIKE"/>
    <property type="match status" value="1"/>
</dbReference>
<name>IHFA_ACIBT</name>
<protein>
    <recommendedName>
        <fullName evidence="1">Integration host factor subunit alpha</fullName>
        <shortName evidence="1">IHF-alpha</shortName>
    </recommendedName>
</protein>
<evidence type="ECO:0000255" key="1">
    <source>
        <dbReference type="HAMAP-Rule" id="MF_00380"/>
    </source>
</evidence>
<reference key="1">
    <citation type="journal article" date="2007" name="Genes Dev.">
        <title>New insights into Acinetobacter baumannii pathogenesis revealed by high-density pyrosequencing and transposon mutagenesis.</title>
        <authorList>
            <person name="Smith M.G."/>
            <person name="Gianoulis T.A."/>
            <person name="Pukatzki S."/>
            <person name="Mekalanos J.J."/>
            <person name="Ornston L.N."/>
            <person name="Gerstein M."/>
            <person name="Snyder M."/>
        </authorList>
    </citation>
    <scope>NUCLEOTIDE SEQUENCE [LARGE SCALE GENOMIC DNA]</scope>
    <source>
        <strain>ATCC 17978 / DSM 105126 / CIP 53.77 / LMG 1025 / NCDC KC755 / 5377</strain>
    </source>
</reference>
<accession>A3M2B0</accession>
<comment type="function">
    <text evidence="1">This protein is one of the two subunits of integration host factor, a specific DNA-binding protein that functions in genetic recombination as well as in transcriptional and translational control.</text>
</comment>
<comment type="subunit">
    <text evidence="1">Heterodimer of an alpha and a beta chain.</text>
</comment>
<comment type="similarity">
    <text evidence="1">Belongs to the bacterial histone-like protein family.</text>
</comment>
<gene>
    <name evidence="1" type="primary">ihfA</name>
    <name evidence="1" type="synonym">himA</name>
    <name type="ordered locus">A1S_0603</name>
</gene>
<keyword id="KW-0233">DNA recombination</keyword>
<keyword id="KW-0238">DNA-binding</keyword>
<keyword id="KW-0804">Transcription</keyword>
<keyword id="KW-0805">Transcription regulation</keyword>
<keyword id="KW-0810">Translation regulation</keyword>
<sequence length="98" mass="11178">MTALTKADMADHLSELTSLNRREAKQMVELFFDEISQALIAGEQVKLSGFGNFELRDKRERPGRNPKTGEEIPISARRVVTFRAGQKFRQRVGNEQID</sequence>
<feature type="chain" id="PRO_1000122123" description="Integration host factor subunit alpha">
    <location>
        <begin position="1"/>
        <end position="98"/>
    </location>
</feature>